<accession>Q485F0</accession>
<keyword id="KW-0029">Amino-acid transport</keyword>
<keyword id="KW-0997">Cell inner membrane</keyword>
<keyword id="KW-1003">Cell membrane</keyword>
<keyword id="KW-0472">Membrane</keyword>
<keyword id="KW-0769">Symport</keyword>
<keyword id="KW-0812">Transmembrane</keyword>
<keyword id="KW-1133">Transmembrane helix</keyword>
<keyword id="KW-0813">Transport</keyword>
<reference key="1">
    <citation type="journal article" date="2005" name="Proc. Natl. Acad. Sci. U.S.A.">
        <title>The psychrophilic lifestyle as revealed by the genome sequence of Colwellia psychrerythraea 34H through genomic and proteomic analyses.</title>
        <authorList>
            <person name="Methe B.A."/>
            <person name="Nelson K.E."/>
            <person name="Deming J.W."/>
            <person name="Momen B."/>
            <person name="Melamud E."/>
            <person name="Zhang X."/>
            <person name="Moult J."/>
            <person name="Madupu R."/>
            <person name="Nelson W.C."/>
            <person name="Dodson R.J."/>
            <person name="Brinkac L.M."/>
            <person name="Daugherty S.C."/>
            <person name="Durkin A.S."/>
            <person name="DeBoy R.T."/>
            <person name="Kolonay J.F."/>
            <person name="Sullivan S.A."/>
            <person name="Zhou L."/>
            <person name="Davidsen T.M."/>
            <person name="Wu M."/>
            <person name="Huston A.L."/>
            <person name="Lewis M."/>
            <person name="Weaver B."/>
            <person name="Weidman J.F."/>
            <person name="Khouri H."/>
            <person name="Utterback T.R."/>
            <person name="Feldblyum T.V."/>
            <person name="Fraser C.M."/>
        </authorList>
    </citation>
    <scope>NUCLEOTIDE SEQUENCE [LARGE SCALE GENOMIC DNA]</scope>
    <source>
        <strain>34H / ATCC BAA-681</strain>
    </source>
</reference>
<gene>
    <name evidence="1" type="primary">sstT</name>
    <name type="ordered locus">CPS_1573</name>
</gene>
<protein>
    <recommendedName>
        <fullName evidence="1">Serine/threonine transporter SstT</fullName>
    </recommendedName>
    <alternativeName>
        <fullName evidence="1">Na(+)/serine-threonine symporter</fullName>
    </alternativeName>
</protein>
<feature type="chain" id="PRO_0000309081" description="Serine/threonine transporter SstT">
    <location>
        <begin position="1"/>
        <end position="408"/>
    </location>
</feature>
<feature type="transmembrane region" description="Helical" evidence="1">
    <location>
        <begin position="19"/>
        <end position="39"/>
    </location>
</feature>
<feature type="transmembrane region" description="Helical" evidence="1">
    <location>
        <begin position="48"/>
        <end position="68"/>
    </location>
</feature>
<feature type="transmembrane region" description="Helical" evidence="1">
    <location>
        <begin position="86"/>
        <end position="106"/>
    </location>
</feature>
<feature type="transmembrane region" description="Helical" evidence="1">
    <location>
        <begin position="143"/>
        <end position="163"/>
    </location>
</feature>
<feature type="transmembrane region" description="Helical" evidence="1">
    <location>
        <begin position="193"/>
        <end position="213"/>
    </location>
</feature>
<feature type="transmembrane region" description="Helical" evidence="1">
    <location>
        <begin position="223"/>
        <end position="243"/>
    </location>
</feature>
<feature type="transmembrane region" description="Helical" evidence="1">
    <location>
        <begin position="294"/>
        <end position="314"/>
    </location>
</feature>
<feature type="transmembrane region" description="Helical" evidence="1">
    <location>
        <begin position="322"/>
        <end position="342"/>
    </location>
</feature>
<feature type="transmembrane region" description="Helical" evidence="1">
    <location>
        <begin position="367"/>
        <end position="387"/>
    </location>
</feature>
<name>SSTT_COLP3</name>
<dbReference type="EMBL" id="CP000083">
    <property type="protein sequence ID" value="AAZ24429.1"/>
    <property type="molecule type" value="Genomic_DNA"/>
</dbReference>
<dbReference type="RefSeq" id="WP_011042409.1">
    <property type="nucleotide sequence ID" value="NC_003910.7"/>
</dbReference>
<dbReference type="SMR" id="Q485F0"/>
<dbReference type="KEGG" id="cps:CPS_1573"/>
<dbReference type="eggNOG" id="COG3633">
    <property type="taxonomic scope" value="Bacteria"/>
</dbReference>
<dbReference type="HOGENOM" id="CLU_044581_0_0_6"/>
<dbReference type="Proteomes" id="UP000000547">
    <property type="component" value="Chromosome"/>
</dbReference>
<dbReference type="GO" id="GO:0005886">
    <property type="term" value="C:plasma membrane"/>
    <property type="evidence" value="ECO:0007669"/>
    <property type="project" value="UniProtKB-SubCell"/>
</dbReference>
<dbReference type="GO" id="GO:0005295">
    <property type="term" value="F:neutral L-amino acid:sodium symporter activity"/>
    <property type="evidence" value="ECO:0007669"/>
    <property type="project" value="TreeGrafter"/>
</dbReference>
<dbReference type="GO" id="GO:0032329">
    <property type="term" value="P:serine transport"/>
    <property type="evidence" value="ECO:0007669"/>
    <property type="project" value="InterPro"/>
</dbReference>
<dbReference type="GO" id="GO:0015826">
    <property type="term" value="P:threonine transport"/>
    <property type="evidence" value="ECO:0007669"/>
    <property type="project" value="InterPro"/>
</dbReference>
<dbReference type="FunFam" id="1.10.3860.10:FF:000003">
    <property type="entry name" value="Serine/threonine transporter sstT"/>
    <property type="match status" value="1"/>
</dbReference>
<dbReference type="Gene3D" id="1.10.3860.10">
    <property type="entry name" value="Sodium:dicarboxylate symporter"/>
    <property type="match status" value="1"/>
</dbReference>
<dbReference type="HAMAP" id="MF_01582">
    <property type="entry name" value="Ser_Thr_transp_SstT"/>
    <property type="match status" value="1"/>
</dbReference>
<dbReference type="InterPro" id="IPR001991">
    <property type="entry name" value="Na-dicarboxylate_symporter"/>
</dbReference>
<dbReference type="InterPro" id="IPR036458">
    <property type="entry name" value="Na:dicarbo_symporter_sf"/>
</dbReference>
<dbReference type="InterPro" id="IPR023025">
    <property type="entry name" value="Ser_Thr_transp_SstT"/>
</dbReference>
<dbReference type="NCBIfam" id="NF010151">
    <property type="entry name" value="PRK13628.1"/>
    <property type="match status" value="1"/>
</dbReference>
<dbReference type="PANTHER" id="PTHR42865">
    <property type="entry name" value="PROTON/GLUTAMATE-ASPARTATE SYMPORTER"/>
    <property type="match status" value="1"/>
</dbReference>
<dbReference type="PANTHER" id="PTHR42865:SF8">
    <property type="entry name" value="SERINE_THREONINE TRANSPORTER SSTT"/>
    <property type="match status" value="1"/>
</dbReference>
<dbReference type="Pfam" id="PF00375">
    <property type="entry name" value="SDF"/>
    <property type="match status" value="1"/>
</dbReference>
<dbReference type="PRINTS" id="PR00173">
    <property type="entry name" value="EDTRNSPORT"/>
</dbReference>
<dbReference type="SUPFAM" id="SSF118215">
    <property type="entry name" value="Proton glutamate symport protein"/>
    <property type="match status" value="1"/>
</dbReference>
<proteinExistence type="inferred from homology"/>
<evidence type="ECO:0000255" key="1">
    <source>
        <dbReference type="HAMAP-Rule" id="MF_01582"/>
    </source>
</evidence>
<organism>
    <name type="scientific">Colwellia psychrerythraea (strain 34H / ATCC BAA-681)</name>
    <name type="common">Vibrio psychroerythus</name>
    <dbReference type="NCBI Taxonomy" id="167879"/>
    <lineage>
        <taxon>Bacteria</taxon>
        <taxon>Pseudomonadati</taxon>
        <taxon>Pseudomonadota</taxon>
        <taxon>Gammaproteobacteria</taxon>
        <taxon>Alteromonadales</taxon>
        <taxon>Colwelliaceae</taxon>
        <taxon>Colwellia</taxon>
    </lineage>
</organism>
<sequence length="408" mass="42174">MTSEKPQNESFIQKIKSTSLVSQIIVAIILASLLAVISPESAKAFGMLGSLFVNALKAVAPILVLVLVTSAIANQKMDSSAELKPIVGLYFLGTLSAALVAVLLSFAFPTELTLDLAGATANPPQKLTEVLATLAFKVVENPVTAVASGNFIAVLAWGLGLGFSLKHASESSKGMVHDLSEAISSVVRIVIRFAPLGIFGLVANTIATTGFSALGEYSHLVAVLLSAMLIIALLVNPLIVFIITKKNPYPLVFTCLKESGITAFFTRSSAANIPVNMALCKKLDLHEDTYSVSIPLGATINMAGAAITITVLTLAAAYSLNIEVSFATAILLSVVASISACGASGVAGGSLLLIPLACSLFGINNDVAMQVVAIGFIIGVIQDSAETALNSSTDVVFSAAASHHITKE</sequence>
<comment type="function">
    <text evidence="1">Involved in the import of serine and threonine into the cell, with the concomitant import of sodium (symport system).</text>
</comment>
<comment type="catalytic activity">
    <reaction evidence="1">
        <text>L-serine(in) + Na(+)(in) = L-serine(out) + Na(+)(out)</text>
        <dbReference type="Rhea" id="RHEA:29575"/>
        <dbReference type="ChEBI" id="CHEBI:29101"/>
        <dbReference type="ChEBI" id="CHEBI:33384"/>
    </reaction>
    <physiologicalReaction direction="right-to-left" evidence="1">
        <dbReference type="Rhea" id="RHEA:29577"/>
    </physiologicalReaction>
</comment>
<comment type="catalytic activity">
    <reaction evidence="1">
        <text>L-threonine(in) + Na(+)(in) = L-threonine(out) + Na(+)(out)</text>
        <dbReference type="Rhea" id="RHEA:69999"/>
        <dbReference type="ChEBI" id="CHEBI:29101"/>
        <dbReference type="ChEBI" id="CHEBI:57926"/>
    </reaction>
    <physiologicalReaction direction="right-to-left" evidence="1">
        <dbReference type="Rhea" id="RHEA:70001"/>
    </physiologicalReaction>
</comment>
<comment type="subcellular location">
    <subcellularLocation>
        <location evidence="1">Cell inner membrane</location>
        <topology evidence="1">Multi-pass membrane protein</topology>
    </subcellularLocation>
</comment>
<comment type="similarity">
    <text evidence="1">Belongs to the dicarboxylate/amino acid:cation symporter (DAACS) (TC 2.A.23) family.</text>
</comment>